<feature type="chain" id="PRO_0000202116" description="C4-dicarboxylate transport protein">
    <location>
        <begin position="1"/>
        <end position="449"/>
    </location>
</feature>
<feature type="transmembrane region" description="Helical" evidence="1">
    <location>
        <begin position="20"/>
        <end position="42"/>
    </location>
</feature>
<feature type="transmembrane region" description="Helical" evidence="1">
    <location>
        <begin position="62"/>
        <end position="84"/>
    </location>
</feature>
<feature type="transmembrane region" description="Helical" evidence="1">
    <location>
        <begin position="91"/>
        <end position="113"/>
    </location>
</feature>
<feature type="transmembrane region" description="Helical" evidence="1">
    <location>
        <begin position="164"/>
        <end position="181"/>
    </location>
</feature>
<feature type="transmembrane region" description="Helical" evidence="1">
    <location>
        <begin position="202"/>
        <end position="224"/>
    </location>
</feature>
<feature type="transmembrane region" description="Helical" evidence="1">
    <location>
        <begin position="239"/>
        <end position="261"/>
    </location>
</feature>
<feature type="transmembrane region" description="Helical" evidence="1">
    <location>
        <begin position="344"/>
        <end position="366"/>
    </location>
</feature>
<feature type="transmembrane region" description="Helical" evidence="1">
    <location>
        <begin position="370"/>
        <end position="389"/>
    </location>
</feature>
<evidence type="ECO:0000255" key="1">
    <source>
        <dbReference type="HAMAP-Rule" id="MF_01300"/>
    </source>
</evidence>
<protein>
    <recommendedName>
        <fullName evidence="1">C4-dicarboxylate transport protein</fullName>
    </recommendedName>
</protein>
<gene>
    <name evidence="1" type="primary">dctA</name>
    <name type="ordered locus">PD_0271</name>
</gene>
<reference key="1">
    <citation type="journal article" date="2003" name="J. Bacteriol.">
        <title>Comparative analyses of the complete genome sequences of Pierce's disease and citrus variegated chlorosis strains of Xylella fastidiosa.</title>
        <authorList>
            <person name="Van Sluys M.A."/>
            <person name="de Oliveira M.C."/>
            <person name="Monteiro-Vitorello C.B."/>
            <person name="Miyaki C.Y."/>
            <person name="Furlan L.R."/>
            <person name="Camargo L.E.A."/>
            <person name="da Silva A.C.R."/>
            <person name="Moon D.H."/>
            <person name="Takita M.A."/>
            <person name="Lemos E.G.M."/>
            <person name="Machado M.A."/>
            <person name="Ferro M.I.T."/>
            <person name="da Silva F.R."/>
            <person name="Goldman M.H.S."/>
            <person name="Goldman G.H."/>
            <person name="Lemos M.V.F."/>
            <person name="El-Dorry H."/>
            <person name="Tsai S.M."/>
            <person name="Carrer H."/>
            <person name="Carraro D.M."/>
            <person name="de Oliveira R.C."/>
            <person name="Nunes L.R."/>
            <person name="Siqueira W.J."/>
            <person name="Coutinho L.L."/>
            <person name="Kimura E.T."/>
            <person name="Ferro E.S."/>
            <person name="Harakava R."/>
            <person name="Kuramae E.E."/>
            <person name="Marino C.L."/>
            <person name="Giglioti E."/>
            <person name="Abreu I.L."/>
            <person name="Alves L.M.C."/>
            <person name="do Amaral A.M."/>
            <person name="Baia G.S."/>
            <person name="Blanco S.R."/>
            <person name="Brito M.S."/>
            <person name="Cannavan F.S."/>
            <person name="Celestino A.V."/>
            <person name="da Cunha A.F."/>
            <person name="Fenille R.C."/>
            <person name="Ferro J.A."/>
            <person name="Formighieri E.F."/>
            <person name="Kishi L.T."/>
            <person name="Leoni S.G."/>
            <person name="Oliveira A.R."/>
            <person name="Rosa V.E. Jr."/>
            <person name="Sassaki F.T."/>
            <person name="Sena J.A.D."/>
            <person name="de Souza A.A."/>
            <person name="Truffi D."/>
            <person name="Tsukumo F."/>
            <person name="Yanai G.M."/>
            <person name="Zaros L.G."/>
            <person name="Civerolo E.L."/>
            <person name="Simpson A.J.G."/>
            <person name="Almeida N.F. Jr."/>
            <person name="Setubal J.C."/>
            <person name="Kitajima J.P."/>
        </authorList>
    </citation>
    <scope>NUCLEOTIDE SEQUENCE [LARGE SCALE GENOMIC DNA]</scope>
    <source>
        <strain>Temecula1 / ATCC 700964</strain>
    </source>
</reference>
<organism>
    <name type="scientific">Xylella fastidiosa (strain Temecula1 / ATCC 700964)</name>
    <dbReference type="NCBI Taxonomy" id="183190"/>
    <lineage>
        <taxon>Bacteria</taxon>
        <taxon>Pseudomonadati</taxon>
        <taxon>Pseudomonadota</taxon>
        <taxon>Gammaproteobacteria</taxon>
        <taxon>Lysobacterales</taxon>
        <taxon>Lysobacteraceae</taxon>
        <taxon>Xylella</taxon>
    </lineage>
</organism>
<sequence length="449" mass="47631">MHPSSRANGPAPHKPYNPFYLQLYFWVIIAIILGALLGHCYPAVGQQLKPLGDAFIKLVKMIISPVIFLTIVTGIASVAHVGTVARVFGKAMVYFLFFSTLALLLGLVVAHVVHPGAGMNINPVDLHQGEIANYVEKSHDLTLVGFLMDIIPKTLLSPFVGDNILQVLFVAVLFGIALALAGERGKPVLNLLDALTVPVFKLVQMLMKMAPIGAFGAIAFTIGKYGVDSLVNLGGLVGSFYLTSLLFVLVILGAVSWLCGFSILKLIRYLKAELLLVLGTSSSESALPSLMEKMVQAGCGKSVVGLVVPTGYSFNLDGTNIYMTLAALFIAQATNTELTPAHQLALFLVAMLSSKGAAGVSGAGFITLAATLAVVPEVPIAGMALILGVDRFMSECRSLTNFIGNAVATLVVSRWENALNYEQLKIALDGSEAAYQSLHANDAEPSVSR</sequence>
<dbReference type="EMBL" id="AE009442">
    <property type="protein sequence ID" value="AAO28157.1"/>
    <property type="molecule type" value="Genomic_DNA"/>
</dbReference>
<dbReference type="RefSeq" id="WP_004087914.1">
    <property type="nucleotide sequence ID" value="NC_004556.1"/>
</dbReference>
<dbReference type="SMR" id="Q87EN2"/>
<dbReference type="KEGG" id="xft:PD_0271"/>
<dbReference type="HOGENOM" id="CLU_019375_7_0_6"/>
<dbReference type="Proteomes" id="UP000002516">
    <property type="component" value="Chromosome"/>
</dbReference>
<dbReference type="GO" id="GO:0005886">
    <property type="term" value="C:plasma membrane"/>
    <property type="evidence" value="ECO:0007669"/>
    <property type="project" value="UniProtKB-SubCell"/>
</dbReference>
<dbReference type="GO" id="GO:0015138">
    <property type="term" value="F:fumarate transmembrane transporter activity"/>
    <property type="evidence" value="ECO:0007669"/>
    <property type="project" value="TreeGrafter"/>
</dbReference>
<dbReference type="GO" id="GO:0015366">
    <property type="term" value="F:malate:proton symporter activity"/>
    <property type="evidence" value="ECO:0007669"/>
    <property type="project" value="TreeGrafter"/>
</dbReference>
<dbReference type="GO" id="GO:0015141">
    <property type="term" value="F:succinate transmembrane transporter activity"/>
    <property type="evidence" value="ECO:0007669"/>
    <property type="project" value="TreeGrafter"/>
</dbReference>
<dbReference type="GO" id="GO:0070778">
    <property type="term" value="P:L-aspartate transmembrane transport"/>
    <property type="evidence" value="ECO:0007669"/>
    <property type="project" value="TreeGrafter"/>
</dbReference>
<dbReference type="FunFam" id="1.10.3860.10:FF:000001">
    <property type="entry name" value="C4-dicarboxylate transport protein"/>
    <property type="match status" value="1"/>
</dbReference>
<dbReference type="Gene3D" id="1.10.3860.10">
    <property type="entry name" value="Sodium:dicarboxylate symporter"/>
    <property type="match status" value="1"/>
</dbReference>
<dbReference type="HAMAP" id="MF_01300">
    <property type="entry name" value="C4_dicarb_transport"/>
    <property type="match status" value="1"/>
</dbReference>
<dbReference type="InterPro" id="IPR023954">
    <property type="entry name" value="C4_dicarb_transport"/>
</dbReference>
<dbReference type="InterPro" id="IPR001991">
    <property type="entry name" value="Na-dicarboxylate_symporter"/>
</dbReference>
<dbReference type="InterPro" id="IPR018107">
    <property type="entry name" value="Na-dicarboxylate_symporter_CS"/>
</dbReference>
<dbReference type="InterPro" id="IPR036458">
    <property type="entry name" value="Na:dicarbo_symporter_sf"/>
</dbReference>
<dbReference type="NCBIfam" id="NF002461">
    <property type="entry name" value="PRK01663.1"/>
    <property type="match status" value="1"/>
</dbReference>
<dbReference type="PANTHER" id="PTHR42865:SF1">
    <property type="entry name" value="AEROBIC C4-DICARBOXYLATE TRANSPORT PROTEIN"/>
    <property type="match status" value="1"/>
</dbReference>
<dbReference type="PANTHER" id="PTHR42865">
    <property type="entry name" value="PROTON/GLUTAMATE-ASPARTATE SYMPORTER"/>
    <property type="match status" value="1"/>
</dbReference>
<dbReference type="Pfam" id="PF00375">
    <property type="entry name" value="SDF"/>
    <property type="match status" value="1"/>
</dbReference>
<dbReference type="PRINTS" id="PR00173">
    <property type="entry name" value="EDTRNSPORT"/>
</dbReference>
<dbReference type="SUPFAM" id="SSF118215">
    <property type="entry name" value="Proton glutamate symport protein"/>
    <property type="match status" value="1"/>
</dbReference>
<dbReference type="PROSITE" id="PS00713">
    <property type="entry name" value="NA_DICARBOXYL_SYMP_1"/>
    <property type="match status" value="1"/>
</dbReference>
<dbReference type="PROSITE" id="PS00714">
    <property type="entry name" value="NA_DICARBOXYL_SYMP_2"/>
    <property type="match status" value="1"/>
</dbReference>
<comment type="function">
    <text evidence="1">Responsible for the transport of dicarboxylates such as succinate, fumarate, and malate from the periplasm across the membrane.</text>
</comment>
<comment type="subcellular location">
    <subcellularLocation>
        <location evidence="1">Cell inner membrane</location>
        <topology evidence="1">Multi-pass membrane protein</topology>
    </subcellularLocation>
</comment>
<comment type="similarity">
    <text evidence="1">Belongs to the dicarboxylate/amino acid:cation symporter (DAACS) (TC 2.A.23) family.</text>
</comment>
<proteinExistence type="inferred from homology"/>
<keyword id="KW-0997">Cell inner membrane</keyword>
<keyword id="KW-1003">Cell membrane</keyword>
<keyword id="KW-0472">Membrane</keyword>
<keyword id="KW-1185">Reference proteome</keyword>
<keyword id="KW-0769">Symport</keyword>
<keyword id="KW-0812">Transmembrane</keyword>
<keyword id="KW-1133">Transmembrane helix</keyword>
<keyword id="KW-0813">Transport</keyword>
<name>DCTA_XYLFT</name>
<accession>Q87EN2</accession>